<gene>
    <name type="primary">yidC</name>
    <name type="ordered locus">MT4040</name>
</gene>
<protein>
    <recommendedName>
        <fullName>Membrane protein insertase YidC</fullName>
    </recommendedName>
    <alternativeName>
        <fullName>Foldase YidC</fullName>
    </alternativeName>
    <alternativeName>
        <fullName>Membrane integrase YidC</fullName>
    </alternativeName>
    <alternativeName>
        <fullName>Membrane protein YidC</fullName>
    </alternativeName>
</protein>
<name>YIDC_MYCTO</name>
<feature type="chain" id="PRO_0000427949" description="Membrane protein insertase YidC">
    <location>
        <begin position="1"/>
        <end position="366"/>
    </location>
</feature>
<feature type="transmembrane region" description="Helical" evidence="2">
    <location>
        <begin position="3"/>
        <end position="23"/>
    </location>
</feature>
<feature type="transmembrane region" description="Helical" evidence="2">
    <location>
        <begin position="28"/>
        <end position="48"/>
    </location>
</feature>
<feature type="transmembrane region" description="Helical" evidence="2">
    <location>
        <begin position="106"/>
        <end position="126"/>
    </location>
</feature>
<feature type="transmembrane region" description="Helical" evidence="2">
    <location>
        <begin position="191"/>
        <end position="211"/>
    </location>
</feature>
<feature type="transmembrane region" description="Helical" evidence="2">
    <location>
        <begin position="237"/>
        <end position="257"/>
    </location>
</feature>
<feature type="region of interest" description="Disordered" evidence="3">
    <location>
        <begin position="285"/>
        <end position="366"/>
    </location>
</feature>
<feature type="compositionally biased region" description="Low complexity" evidence="3">
    <location>
        <begin position="308"/>
        <end position="321"/>
    </location>
</feature>
<feature type="compositionally biased region" description="Polar residues" evidence="3">
    <location>
        <begin position="339"/>
        <end position="351"/>
    </location>
</feature>
<keyword id="KW-1003">Cell membrane</keyword>
<keyword id="KW-0143">Chaperone</keyword>
<keyword id="KW-0472">Membrane</keyword>
<keyword id="KW-0653">Protein transport</keyword>
<keyword id="KW-1185">Reference proteome</keyword>
<keyword id="KW-0812">Transmembrane</keyword>
<keyword id="KW-1133">Transmembrane helix</keyword>
<keyword id="KW-0813">Transport</keyword>
<evidence type="ECO:0000250" key="1"/>
<evidence type="ECO:0000255" key="2"/>
<evidence type="ECO:0000256" key="3">
    <source>
        <dbReference type="SAM" id="MobiDB-lite"/>
    </source>
</evidence>
<evidence type="ECO:0000305" key="4"/>
<sequence>MSLLFDFFSLDFIYYPVSWIMWVWYRLFAFVLGPSNFFAWALSVMFLVFTLRALLYKPFVRQIRTTRQMQELQPQIKALQKKYGKDRQRMALEMQKLQREHGFNPILGCLPMLAQIPVFLGLYHVLRSFNRTTGGFGQPHLSVIENRLTGNYVFSPVDVGHFLDANLFGAPIGAYMTQRSGLDAFVDFSRPALIAVGVPVMILAGIATYFNSRASIARQSAEAAANPQTAMMNKLALYVFPLGVVVGGPFLPLAIILYWFSNNIWTFGQQHYVFGMIEKEEEAKKQEAVRRRAANAPAPGAKPKRSPKTAPATNAAAPTEAGDTDDGAESDASTERPADTSNPARRNSGPSARTPRPGVRPKKRKR</sequence>
<reference key="1">
    <citation type="journal article" date="2002" name="J. Bacteriol.">
        <title>Whole-genome comparison of Mycobacterium tuberculosis clinical and laboratory strains.</title>
        <authorList>
            <person name="Fleischmann R.D."/>
            <person name="Alland D."/>
            <person name="Eisen J.A."/>
            <person name="Carpenter L."/>
            <person name="White O."/>
            <person name="Peterson J.D."/>
            <person name="DeBoy R.T."/>
            <person name="Dodson R.J."/>
            <person name="Gwinn M.L."/>
            <person name="Haft D.H."/>
            <person name="Hickey E.K."/>
            <person name="Kolonay J.F."/>
            <person name="Nelson W.C."/>
            <person name="Umayam L.A."/>
            <person name="Ermolaeva M.D."/>
            <person name="Salzberg S.L."/>
            <person name="Delcher A."/>
            <person name="Utterback T.R."/>
            <person name="Weidman J.F."/>
            <person name="Khouri H.M."/>
            <person name="Gill J."/>
            <person name="Mikula A."/>
            <person name="Bishai W."/>
            <person name="Jacobs W.R. Jr."/>
            <person name="Venter J.C."/>
            <person name="Fraser C.M."/>
        </authorList>
    </citation>
    <scope>NUCLEOTIDE SEQUENCE [LARGE SCALE GENOMIC DNA]</scope>
    <source>
        <strain>CDC 1551 / Oshkosh</strain>
    </source>
</reference>
<proteinExistence type="inferred from homology"/>
<comment type="function">
    <text evidence="1">Required for the insertion and/or proper folding and/or complex formation of integral membrane proteins into the membrane. Involved in integration of membrane proteins that insert both dependently and independently of the Sec translocase complex, as well as at least some lipoproteins. Aids folding of multispanning membrane proteins (By similarity).</text>
</comment>
<comment type="subunit">
    <text evidence="1">Interacts with the Sec translocase complex via SecD. Specifically interacts with transmembrane segments of nascent integral membrane proteins during membrane integration (By similarity).</text>
</comment>
<comment type="subcellular location">
    <subcellularLocation>
        <location evidence="1">Cell membrane</location>
        <topology evidence="1">Multi-pass membrane protein</topology>
    </subcellularLocation>
</comment>
<comment type="similarity">
    <text evidence="4">Belongs to the OXA1/ALB3/YidC family. Type 1 subfamily.</text>
</comment>
<organism>
    <name type="scientific">Mycobacterium tuberculosis (strain CDC 1551 / Oshkosh)</name>
    <dbReference type="NCBI Taxonomy" id="83331"/>
    <lineage>
        <taxon>Bacteria</taxon>
        <taxon>Bacillati</taxon>
        <taxon>Actinomycetota</taxon>
        <taxon>Actinomycetes</taxon>
        <taxon>Mycobacteriales</taxon>
        <taxon>Mycobacteriaceae</taxon>
        <taxon>Mycobacterium</taxon>
        <taxon>Mycobacterium tuberculosis complex</taxon>
    </lineage>
</organism>
<accession>P9WIT4</accession>
<accession>L0TH52</accession>
<accession>O53599</accession>
<accession>P65626</accession>
<accession>Q7TVC3</accession>
<dbReference type="EMBL" id="AE000516">
    <property type="protein sequence ID" value="AAK48406.1"/>
    <property type="molecule type" value="Genomic_DNA"/>
</dbReference>
<dbReference type="PIR" id="A70852">
    <property type="entry name" value="A70852"/>
</dbReference>
<dbReference type="RefSeq" id="WP_003899765.1">
    <property type="nucleotide sequence ID" value="NZ_KK341228.1"/>
</dbReference>
<dbReference type="SMR" id="P9WIT4"/>
<dbReference type="GeneID" id="45427921"/>
<dbReference type="KEGG" id="mtc:MT4040"/>
<dbReference type="PATRIC" id="fig|83331.31.peg.4346"/>
<dbReference type="HOGENOM" id="CLU_036138_3_0_11"/>
<dbReference type="Proteomes" id="UP000001020">
    <property type="component" value="Chromosome"/>
</dbReference>
<dbReference type="GO" id="GO:0005886">
    <property type="term" value="C:plasma membrane"/>
    <property type="evidence" value="ECO:0007669"/>
    <property type="project" value="UniProtKB-SubCell"/>
</dbReference>
<dbReference type="GO" id="GO:0032977">
    <property type="term" value="F:membrane insertase activity"/>
    <property type="evidence" value="ECO:0007669"/>
    <property type="project" value="InterPro"/>
</dbReference>
<dbReference type="GO" id="GO:0051205">
    <property type="term" value="P:protein insertion into membrane"/>
    <property type="evidence" value="ECO:0007669"/>
    <property type="project" value="TreeGrafter"/>
</dbReference>
<dbReference type="GO" id="GO:0015031">
    <property type="term" value="P:protein transport"/>
    <property type="evidence" value="ECO:0007669"/>
    <property type="project" value="UniProtKB-KW"/>
</dbReference>
<dbReference type="CDD" id="cd20070">
    <property type="entry name" value="5TM_YidC_Alb3"/>
    <property type="match status" value="1"/>
</dbReference>
<dbReference type="InterPro" id="IPR001708">
    <property type="entry name" value="YidC/ALB3/OXA1/COX18"/>
</dbReference>
<dbReference type="InterPro" id="IPR028055">
    <property type="entry name" value="YidC/Oxa/ALB_C"/>
</dbReference>
<dbReference type="InterPro" id="IPR047196">
    <property type="entry name" value="YidC_ALB_C"/>
</dbReference>
<dbReference type="NCBIfam" id="NF002899">
    <property type="entry name" value="PRK03449.1"/>
    <property type="match status" value="1"/>
</dbReference>
<dbReference type="NCBIfam" id="TIGR03592">
    <property type="entry name" value="yidC_oxa1_cterm"/>
    <property type="match status" value="1"/>
</dbReference>
<dbReference type="PANTHER" id="PTHR12428:SF65">
    <property type="entry name" value="CYTOCHROME C OXIDASE ASSEMBLY PROTEIN COX18, MITOCHONDRIAL"/>
    <property type="match status" value="1"/>
</dbReference>
<dbReference type="PANTHER" id="PTHR12428">
    <property type="entry name" value="OXA1"/>
    <property type="match status" value="1"/>
</dbReference>
<dbReference type="Pfam" id="PF02096">
    <property type="entry name" value="60KD_IMP"/>
    <property type="match status" value="1"/>
</dbReference>